<name>DPOM_NEUIN</name>
<accession>P33538</accession>
<protein>
    <recommendedName>
        <fullName>Probable DNA polymerase</fullName>
        <ecNumber>2.7.7.7</ecNumber>
    </recommendedName>
</protein>
<organism>
    <name type="scientific">Neurospora intermedia</name>
    <dbReference type="NCBI Taxonomy" id="5142"/>
    <lineage>
        <taxon>Eukaryota</taxon>
        <taxon>Fungi</taxon>
        <taxon>Dikarya</taxon>
        <taxon>Ascomycota</taxon>
        <taxon>Pezizomycotina</taxon>
        <taxon>Sordariomycetes</taxon>
        <taxon>Sordariomycetidae</taxon>
        <taxon>Sordariales</taxon>
        <taxon>Sordariaceae</taxon>
        <taxon>Neurospora</taxon>
    </lineage>
</organism>
<keyword id="KW-0235">DNA replication</keyword>
<keyword id="KW-0238">DNA-binding</keyword>
<keyword id="KW-0239">DNA-directed DNA polymerase</keyword>
<keyword id="KW-0496">Mitochondrion</keyword>
<keyword id="KW-0548">Nucleotidyltransferase</keyword>
<keyword id="KW-0614">Plasmid</keyword>
<keyword id="KW-0808">Transferase</keyword>
<comment type="catalytic activity">
    <reaction>
        <text>DNA(n) + a 2'-deoxyribonucleoside 5'-triphosphate = DNA(n+1) + diphosphate</text>
        <dbReference type="Rhea" id="RHEA:22508"/>
        <dbReference type="Rhea" id="RHEA-COMP:17339"/>
        <dbReference type="Rhea" id="RHEA-COMP:17340"/>
        <dbReference type="ChEBI" id="CHEBI:33019"/>
        <dbReference type="ChEBI" id="CHEBI:61560"/>
        <dbReference type="ChEBI" id="CHEBI:173112"/>
        <dbReference type="EC" id="2.7.7.7"/>
    </reaction>
</comment>
<comment type="subcellular location">
    <subcellularLocation>
        <location evidence="2">Mitochondrion</location>
    </subcellularLocation>
</comment>
<comment type="miscellaneous">
    <text evidence="1">This DNA polymerase requires a protein as a primer.</text>
</comment>
<comment type="miscellaneous">
    <text>The name 'Kalilo' originates from Hawai and means 'fatal disease' (because of the senescence induced by the plasmid).</text>
</comment>
<comment type="similarity">
    <text evidence="2">Belongs to the DNA polymerase type-B family.</text>
</comment>
<geneLocation type="mitochondrion"/>
<geneLocation type="plasmid">
    <name>kalilo</name>
</geneLocation>
<reference key="1">
    <citation type="journal article" date="1991" name="Curr. Genet.">
        <title>The kalilo linear senescence-inducing plasmid of Neurospora is an invertron and encodes DNA and RNA polymerases.</title>
        <authorList>
            <person name="Chan B.S.S."/>
            <person name="Court D.A."/>
            <person name="Vierula P.J."/>
            <person name="Bertrand H."/>
        </authorList>
    </citation>
    <scope>NUCLEOTIDE SEQUENCE [GENOMIC DNA]</scope>
</reference>
<feature type="chain" id="PRO_0000046555" description="Probable DNA polymerase">
    <location>
        <begin position="1"/>
        <end position="969"/>
    </location>
</feature>
<sequence>MSKFSFFNYRINMRNSHATLGSLPCFIKFNYLSSSSHSKFYSTSTDSPMGHIVSASKSSWYNYYSHKNYDPLTRESFHDELRGFISLYKKQFKEEKFFFMAKIKFNNNDIRSISTVQIGSTDPLEVLRLLEAITSTYMHTHTGISEAVSEPFEYELFSLGDGLPKGNIIFTFKPTSNPSIKTKYEHKSNIKRNKNINLSKKNPLNKFKYNGYTIPNTMDLSQWPNIHFINDGKNAVSLNNIIKSGVDNMTLSFFITINKKYNEITVLLNNTPIFKIKDEKIMSEDDLSSFKRTITENEQDKVYVFENGEMVFFSENVKTSFIKKITRQDLINFENPKIITLDLETRSVPIHPIKEGKDGKEGKVDSIMFPILMSVYNGKFVKSFLFSQSAWETEMMNAFKSIMLRKYDGYKVYTHNFSYFDGIFIIDILSRLGEVKPFMRNGKILKLTFNFTLPNSKRKYTLYFMDSLLILPDSLDKLSNFFNNKVKKLFFPHSFLDDNTIPINYVGKCPDYKYFPKAYTEDFTIEQYQEYANKFKNNNWDLKKELIKYCEIDTIALYQVLVSFQRKIYEKFMIDCTKYPTIPSLAFAIFRKKYLVEDMIPNIKSKLHNIIKLSYFGGICELYKPFGVNIKSYDVNSLYPFAMKYFKMPSGIPKYVKGTLQNIVRFTDSICEVPFGFYNVKVKTPLNLDKPFLPTRLNTPAGTRTAFPLGQWEGWYFSEEILNAMKHGYEFEFIEGYLFEESSMFDEYIDLLYNIKKNSPKESPWYYISKLLMNSLYGRFGLNPEGEEIFITSEEEGDAIIATKEYVTITPLSSGNVLISAKLPEEAFGDMNISVPISSAIAAYSRIHMSHFLTKYSNNIYYIDTDGIKVDIDLDKDEVDSKELGKMKYEYVFEEYTSLGPKVYGGLLYDKKGKLIELVKLRGYSSKLPYNKLKEGLVKDHTLELTQKKWKRKLSESTVYLKNTHLLFL</sequence>
<dbReference type="EC" id="2.7.7.7"/>
<dbReference type="EMBL" id="X52106">
    <property type="protein sequence ID" value="CAA36327.1"/>
    <property type="status" value="ALT_SEQ"/>
    <property type="molecule type" value="Genomic_DNA"/>
</dbReference>
<dbReference type="PIR" id="S17909">
    <property type="entry name" value="S17909"/>
</dbReference>
<dbReference type="GO" id="GO:0005739">
    <property type="term" value="C:mitochondrion"/>
    <property type="evidence" value="ECO:0007669"/>
    <property type="project" value="UniProtKB-SubCell"/>
</dbReference>
<dbReference type="GO" id="GO:0003677">
    <property type="term" value="F:DNA binding"/>
    <property type="evidence" value="ECO:0007669"/>
    <property type="project" value="UniProtKB-KW"/>
</dbReference>
<dbReference type="GO" id="GO:0003887">
    <property type="term" value="F:DNA-directed DNA polymerase activity"/>
    <property type="evidence" value="ECO:0007669"/>
    <property type="project" value="UniProtKB-KW"/>
</dbReference>
<dbReference type="GO" id="GO:0000166">
    <property type="term" value="F:nucleotide binding"/>
    <property type="evidence" value="ECO:0007669"/>
    <property type="project" value="InterPro"/>
</dbReference>
<dbReference type="GO" id="GO:0006260">
    <property type="term" value="P:DNA replication"/>
    <property type="evidence" value="ECO:0007669"/>
    <property type="project" value="UniProtKB-KW"/>
</dbReference>
<dbReference type="Gene3D" id="1.10.287.690">
    <property type="entry name" value="Helix hairpin bin"/>
    <property type="match status" value="1"/>
</dbReference>
<dbReference type="Gene3D" id="3.90.1600.10">
    <property type="entry name" value="Palm domain of DNA polymerase"/>
    <property type="match status" value="2"/>
</dbReference>
<dbReference type="Gene3D" id="3.30.420.10">
    <property type="entry name" value="Ribonuclease H-like superfamily/Ribonuclease H"/>
    <property type="match status" value="1"/>
</dbReference>
<dbReference type="InterPro" id="IPR006172">
    <property type="entry name" value="DNA-dir_DNA_pol_B"/>
</dbReference>
<dbReference type="InterPro" id="IPR017964">
    <property type="entry name" value="DNA-dir_DNA_pol_B_CS"/>
</dbReference>
<dbReference type="InterPro" id="IPR004868">
    <property type="entry name" value="DNA-dir_DNA_pol_B_mt/vir"/>
</dbReference>
<dbReference type="InterPro" id="IPR015833">
    <property type="entry name" value="DNA-dir_DNA_pol_B_mt_lin_plsmd"/>
</dbReference>
<dbReference type="InterPro" id="IPR043502">
    <property type="entry name" value="DNA/RNA_pol_sf"/>
</dbReference>
<dbReference type="InterPro" id="IPR023211">
    <property type="entry name" value="DNA_pol_palm_dom_sf"/>
</dbReference>
<dbReference type="InterPro" id="IPR012337">
    <property type="entry name" value="RNaseH-like_sf"/>
</dbReference>
<dbReference type="InterPro" id="IPR036397">
    <property type="entry name" value="RNaseH_sf"/>
</dbReference>
<dbReference type="PANTHER" id="PTHR33568">
    <property type="entry name" value="DNA POLYMERASE"/>
    <property type="match status" value="1"/>
</dbReference>
<dbReference type="PANTHER" id="PTHR33568:SF3">
    <property type="entry name" value="DNA-DIRECTED DNA POLYMERASE"/>
    <property type="match status" value="1"/>
</dbReference>
<dbReference type="Pfam" id="PF03175">
    <property type="entry name" value="DNA_pol_B_2"/>
    <property type="match status" value="1"/>
</dbReference>
<dbReference type="PIRSF" id="PIRSF006517">
    <property type="entry name" value="DPol_mt_plasmid"/>
    <property type="match status" value="1"/>
</dbReference>
<dbReference type="SMART" id="SM00486">
    <property type="entry name" value="POLBc"/>
    <property type="match status" value="1"/>
</dbReference>
<dbReference type="SUPFAM" id="SSF56672">
    <property type="entry name" value="DNA/RNA polymerases"/>
    <property type="match status" value="1"/>
</dbReference>
<dbReference type="SUPFAM" id="SSF53098">
    <property type="entry name" value="Ribonuclease H-like"/>
    <property type="match status" value="1"/>
</dbReference>
<dbReference type="PROSITE" id="PS00116">
    <property type="entry name" value="DNA_POLYMERASE_B"/>
    <property type="match status" value="1"/>
</dbReference>
<evidence type="ECO:0000250" key="1"/>
<evidence type="ECO:0000305" key="2"/>
<proteinExistence type="inferred from homology"/>